<sequence>MQPFVYTTAPARIVFGTGSSVGVAEEIRRLGLSRALVLSTPHQKGDAEALAARLGPLAAGVFSDAAMHTPVEVTKRAVEAYRAAGADCVVSLGGGSTTGLGKAIALRTDAPQIVIPTTYAGSEVTPILGQTENGVKTTLRGPEILPEVVIYDAELTLGLPVGISMTSGLNAMAHAAEALYARDRNPIASMMAVEGLRAMIEALPGVRMEPQDTKARETALYGAWLCGTVLGAVGMSLHHKLCHTLGGSLDLPHAETHAVLLPYTIAYVEQAVPDQLAPLAALVGGRAGTGLYDFAARLGAPASLAALGVGGEDLDAMAELATANPYWCPRPVEKTAIRALLQRAFEGARPE</sequence>
<gene>
    <name evidence="4" type="primary">graC</name>
</gene>
<comment type="function">
    <text evidence="1 3">Involved in the gamma-resorcylate (2,6-dihydroxybenzoate) catabolism (PubMed:17158677). Catalyzes the reduction of maleylacetate to 3-oxoadipate (PubMed:17158677, PubMed:27040018).</text>
</comment>
<comment type="catalytic activity">
    <reaction evidence="1 3">
        <text>3-oxoadipate + NAD(+) = maleylacetate + NADH + H(+)</text>
        <dbReference type="Rhea" id="RHEA:16981"/>
        <dbReference type="ChEBI" id="CHEBI:15378"/>
        <dbReference type="ChEBI" id="CHEBI:15775"/>
        <dbReference type="ChEBI" id="CHEBI:16468"/>
        <dbReference type="ChEBI" id="CHEBI:57540"/>
        <dbReference type="ChEBI" id="CHEBI:57945"/>
        <dbReference type="EC" id="1.3.1.32"/>
    </reaction>
    <physiologicalReaction direction="right-to-left" evidence="1 3">
        <dbReference type="Rhea" id="RHEA:16983"/>
    </physiologicalReaction>
</comment>
<comment type="pathway">
    <text evidence="5">Aromatic compound metabolism.</text>
</comment>
<comment type="subunit">
    <text evidence="2 3">Homodimer.</text>
</comment>
<comment type="induction">
    <text evidence="1">Induced in the presence of gamma-resorcylate.</text>
</comment>
<comment type="domain">
    <text evidence="3">Each subunit consists of two domains: an N-terminal NADH-binding domain adopting an alpha/beta structure and a C-terminal functional domain adopting an alpha-helical structure.</text>
</comment>
<comment type="similarity">
    <text evidence="5">Belongs to the iron-containing alcohol dehydrogenase family.</text>
</comment>
<organism>
    <name type="scientific">Rhizobium sp. (strain MTP-10005)</name>
    <dbReference type="NCBI Taxonomy" id="267998"/>
    <lineage>
        <taxon>Bacteria</taxon>
        <taxon>Pseudomonadati</taxon>
        <taxon>Pseudomonadota</taxon>
        <taxon>Alphaproteobacteria</taxon>
        <taxon>Hyphomicrobiales</taxon>
        <taxon>Rhizobiaceae</taxon>
        <taxon>Rhizobium/Agrobacterium group</taxon>
        <taxon>Rhizobium</taxon>
    </lineage>
</organism>
<reference key="1">
    <citation type="journal article" date="2007" name="J. Bacteriol.">
        <title>Biochemical and genetic analysis of the gamma-resorcylate (2,6-dihydroxybenzoate) catabolic pathway in Rhizobium sp. strain MTP-10005: identification and functional analysis of its gene cluster.</title>
        <authorList>
            <person name="Yoshida M."/>
            <person name="Oikawa T."/>
            <person name="Obata H."/>
            <person name="Abe K."/>
            <person name="Mihara H."/>
            <person name="Esaki N."/>
        </authorList>
    </citation>
    <scope>NUCLEOTIDE SEQUENCE [GENOMIC DNA]</scope>
    <scope>FUNCTION</scope>
    <scope>CATALYTIC ACTIVITY</scope>
    <scope>INDUCTION</scope>
    <source>
        <strain>MTP-10005</strain>
    </source>
</reference>
<reference key="2">
    <citation type="journal article" date="2008" name="Acta Crystallogr. F">
        <title>Crystallization and preliminary X-ray diffraction studies of maleylacetate reductase from Rhizobium sp. strain MTP-10005.</title>
        <authorList>
            <person name="Fujii T."/>
            <person name="Goda Y."/>
            <person name="Yoshida M."/>
            <person name="Oikawa T."/>
            <person name="Hata Y."/>
        </authorList>
    </citation>
    <scope>SUBUNIT</scope>
    <scope>CRYSTALLIZATION</scope>
    <source>
        <strain>MTP-10005</strain>
    </source>
</reference>
<reference evidence="6" key="3">
    <citation type="journal article" date="2016" name="Proteins">
        <title>The crystal structure of maleylacetate reductase from Rhizobium sp. strain MTP-10005 provides insights into the reaction mechanism of enzymes in its original family.</title>
        <authorList>
            <person name="Fujii T."/>
            <person name="Sato A."/>
            <person name="Okamoto Y."/>
            <person name="Yamauchi T."/>
            <person name="Kato S."/>
            <person name="Yoshida M."/>
            <person name="Oikawa T."/>
            <person name="Hata Y."/>
        </authorList>
    </citation>
    <scope>X-RAY CRYSTALLOGRAPHY (1.49 ANGSTROMS)</scope>
    <scope>FUNCTION</scope>
    <scope>CATALYTIC ACTIVITY</scope>
    <scope>SUBUNIT</scope>
    <scope>DOMAIN</scope>
    <scope>MUTAGENESIS OF CYS-242; HIS-243 AND TYR-326</scope>
    <source>
        <strain>MTP-10005</strain>
    </source>
</reference>
<evidence type="ECO:0000269" key="1">
    <source>
    </source>
</evidence>
<evidence type="ECO:0000269" key="2">
    <source>
    </source>
</evidence>
<evidence type="ECO:0000269" key="3">
    <source>
    </source>
</evidence>
<evidence type="ECO:0000303" key="4">
    <source>
    </source>
</evidence>
<evidence type="ECO:0000305" key="5"/>
<evidence type="ECO:0007744" key="6">
    <source>
        <dbReference type="PDB" id="3W5S"/>
    </source>
</evidence>
<evidence type="ECO:0007829" key="7">
    <source>
        <dbReference type="PDB" id="3W5S"/>
    </source>
</evidence>
<name>GRAC_RHIS5</name>
<dbReference type="EC" id="1.3.1.32" evidence="1"/>
<dbReference type="EMBL" id="AB266212">
    <property type="protein sequence ID" value="BAF44524.1"/>
    <property type="molecule type" value="Genomic_DNA"/>
</dbReference>
<dbReference type="PDB" id="3W5S">
    <property type="method" value="X-ray"/>
    <property type="resolution" value="1.49 A"/>
    <property type="chains" value="A/B=1-351"/>
</dbReference>
<dbReference type="PDBsum" id="3W5S"/>
<dbReference type="SMR" id="A1IIX4"/>
<dbReference type="BioCyc" id="MetaCyc:MONOMER-19794"/>
<dbReference type="BRENDA" id="1.3.1.32">
    <property type="organism ID" value="5351"/>
</dbReference>
<dbReference type="EvolutionaryTrace" id="A1IIX4"/>
<dbReference type="GO" id="GO:0004022">
    <property type="term" value="F:alcohol dehydrogenase (NAD+) activity"/>
    <property type="evidence" value="ECO:0007669"/>
    <property type="project" value="TreeGrafter"/>
</dbReference>
<dbReference type="GO" id="GO:0018506">
    <property type="term" value="F:maleylacetate reductase activity"/>
    <property type="evidence" value="ECO:0007669"/>
    <property type="project" value="InterPro"/>
</dbReference>
<dbReference type="GO" id="GO:0046872">
    <property type="term" value="F:metal ion binding"/>
    <property type="evidence" value="ECO:0007669"/>
    <property type="project" value="InterPro"/>
</dbReference>
<dbReference type="CDD" id="cd08177">
    <property type="entry name" value="MAR"/>
    <property type="match status" value="1"/>
</dbReference>
<dbReference type="Gene3D" id="3.40.50.1970">
    <property type="match status" value="1"/>
</dbReference>
<dbReference type="Gene3D" id="1.20.1090.10">
    <property type="entry name" value="Dehydroquinate synthase-like - alpha domain"/>
    <property type="match status" value="1"/>
</dbReference>
<dbReference type="InterPro" id="IPR001670">
    <property type="entry name" value="ADH_Fe/GldA"/>
</dbReference>
<dbReference type="InterPro" id="IPR056798">
    <property type="entry name" value="ADH_Fe_C"/>
</dbReference>
<dbReference type="InterPro" id="IPR039697">
    <property type="entry name" value="Alcohol_dehydrogenase_Fe"/>
</dbReference>
<dbReference type="InterPro" id="IPR034786">
    <property type="entry name" value="MAR"/>
</dbReference>
<dbReference type="PANTHER" id="PTHR11496">
    <property type="entry name" value="ALCOHOL DEHYDROGENASE"/>
    <property type="match status" value="1"/>
</dbReference>
<dbReference type="PANTHER" id="PTHR11496:SF102">
    <property type="entry name" value="ALCOHOL DEHYDROGENASE 4"/>
    <property type="match status" value="1"/>
</dbReference>
<dbReference type="Pfam" id="PF25137">
    <property type="entry name" value="ADH_Fe_C"/>
    <property type="match status" value="1"/>
</dbReference>
<dbReference type="Pfam" id="PF00465">
    <property type="entry name" value="Fe-ADH"/>
    <property type="match status" value="1"/>
</dbReference>
<dbReference type="SUPFAM" id="SSF56796">
    <property type="entry name" value="Dehydroquinate synthase-like"/>
    <property type="match status" value="1"/>
</dbReference>
<proteinExistence type="evidence at protein level"/>
<accession>A1IIX4</accession>
<keyword id="KW-0002">3D-structure</keyword>
<keyword id="KW-0520">NAD</keyword>
<keyword id="KW-0560">Oxidoreductase</keyword>
<protein>
    <recommendedName>
        <fullName evidence="4">Maleylacetate reductase</fullName>
        <ecNumber evidence="1">1.3.1.32</ecNumber>
    </recommendedName>
</protein>
<feature type="chain" id="PRO_0000454492" description="Maleylacetate reductase">
    <location>
        <begin position="1"/>
        <end position="351"/>
    </location>
</feature>
<feature type="mutagenesis site" description="Retains 25% of wild-type specific activity." evidence="3">
    <original>C</original>
    <variation>A</variation>
    <location>
        <position position="242"/>
    </location>
</feature>
<feature type="mutagenesis site" description="Retains 0.4% of wild-type specific activity." evidence="3">
    <original>H</original>
    <variation>A</variation>
    <location>
        <position position="243"/>
    </location>
</feature>
<feature type="mutagenesis site" description="Retains 6% of wild-type specific activity." evidence="3">
    <original>Y</original>
    <variation>A</variation>
    <location>
        <position position="326"/>
    </location>
</feature>
<feature type="strand" evidence="7">
    <location>
        <begin position="4"/>
        <end position="8"/>
    </location>
</feature>
<feature type="strand" evidence="7">
    <location>
        <begin position="11"/>
        <end position="16"/>
    </location>
</feature>
<feature type="helix" evidence="7">
    <location>
        <begin position="19"/>
        <end position="22"/>
    </location>
</feature>
<feature type="helix" evidence="7">
    <location>
        <begin position="23"/>
        <end position="29"/>
    </location>
</feature>
<feature type="strand" evidence="7">
    <location>
        <begin position="35"/>
        <end position="38"/>
    </location>
</feature>
<feature type="helix" evidence="7">
    <location>
        <begin position="41"/>
        <end position="43"/>
    </location>
</feature>
<feature type="helix" evidence="7">
    <location>
        <begin position="44"/>
        <end position="54"/>
    </location>
</feature>
<feature type="helix" evidence="7">
    <location>
        <begin position="55"/>
        <end position="57"/>
    </location>
</feature>
<feature type="strand" evidence="7">
    <location>
        <begin position="58"/>
        <end position="62"/>
    </location>
</feature>
<feature type="helix" evidence="7">
    <location>
        <begin position="71"/>
        <end position="83"/>
    </location>
</feature>
<feature type="strand" evidence="7">
    <location>
        <begin position="87"/>
        <end position="94"/>
    </location>
</feature>
<feature type="helix" evidence="7">
    <location>
        <begin position="95"/>
        <end position="108"/>
    </location>
</feature>
<feature type="strand" evidence="7">
    <location>
        <begin position="112"/>
        <end position="116"/>
    </location>
</feature>
<feature type="helix" evidence="7">
    <location>
        <begin position="122"/>
        <end position="124"/>
    </location>
</feature>
<feature type="strand" evidence="7">
    <location>
        <begin position="126"/>
        <end position="132"/>
    </location>
</feature>
<feature type="strand" evidence="7">
    <location>
        <begin position="135"/>
        <end position="140"/>
    </location>
</feature>
<feature type="turn" evidence="7">
    <location>
        <begin position="142"/>
        <end position="144"/>
    </location>
</feature>
<feature type="strand" evidence="7">
    <location>
        <begin position="147"/>
        <end position="151"/>
    </location>
</feature>
<feature type="helix" evidence="7">
    <location>
        <begin position="153"/>
        <end position="156"/>
    </location>
</feature>
<feature type="helix" evidence="7">
    <location>
        <begin position="161"/>
        <end position="178"/>
    </location>
</feature>
<feature type="helix" evidence="7">
    <location>
        <begin position="186"/>
        <end position="208"/>
    </location>
</feature>
<feature type="helix" evidence="7">
    <location>
        <begin position="213"/>
        <end position="233"/>
    </location>
</feature>
<feature type="helix" evidence="7">
    <location>
        <begin position="237"/>
        <end position="249"/>
    </location>
</feature>
<feature type="helix" evidence="7">
    <location>
        <begin position="253"/>
        <end position="269"/>
    </location>
</feature>
<feature type="helix" evidence="7">
    <location>
        <begin position="273"/>
        <end position="283"/>
    </location>
</feature>
<feature type="helix" evidence="7">
    <location>
        <begin position="287"/>
        <end position="298"/>
    </location>
</feature>
<feature type="helix" evidence="7">
    <location>
        <begin position="305"/>
        <end position="307"/>
    </location>
</feature>
<feature type="helix" evidence="7">
    <location>
        <begin position="311"/>
        <end position="313"/>
    </location>
</feature>
<feature type="helix" evidence="7">
    <location>
        <begin position="314"/>
        <end position="321"/>
    </location>
</feature>
<feature type="helix" evidence="7">
    <location>
        <begin position="334"/>
        <end position="346"/>
    </location>
</feature>